<gene>
    <name type="primary">yxeF</name>
    <name type="ordered locus">BSU39570</name>
    <name type="ORF">HS74F</name>
</gene>
<evidence type="ECO:0000255" key="1">
    <source>
        <dbReference type="PROSITE-ProRule" id="PRU00303"/>
    </source>
</evidence>
<evidence type="ECO:0000256" key="2">
    <source>
        <dbReference type="SAM" id="MobiDB-lite"/>
    </source>
</evidence>
<evidence type="ECO:0007829" key="3">
    <source>
        <dbReference type="PDB" id="2JOZ"/>
    </source>
</evidence>
<dbReference type="EMBL" id="D45912">
    <property type="protein sequence ID" value="BAA08322.1"/>
    <property type="molecule type" value="Genomic_DNA"/>
</dbReference>
<dbReference type="EMBL" id="AL009126">
    <property type="protein sequence ID" value="CAB15993.1"/>
    <property type="molecule type" value="Genomic_DNA"/>
</dbReference>
<dbReference type="PIR" id="H70074">
    <property type="entry name" value="H70074"/>
</dbReference>
<dbReference type="RefSeq" id="NP_391836.1">
    <property type="nucleotide sequence ID" value="NC_000964.3"/>
</dbReference>
<dbReference type="RefSeq" id="WP_003244165.1">
    <property type="nucleotide sequence ID" value="NZ_OZ025638.1"/>
</dbReference>
<dbReference type="PDB" id="2JOZ">
    <property type="method" value="NMR"/>
    <property type="chains" value="A=19-144"/>
</dbReference>
<dbReference type="PDBsum" id="2JOZ"/>
<dbReference type="BMRB" id="P54945"/>
<dbReference type="SMR" id="P54945"/>
<dbReference type="FunCoup" id="P54945">
    <property type="interactions" value="91"/>
</dbReference>
<dbReference type="STRING" id="224308.BSU39570"/>
<dbReference type="PaxDb" id="224308-BSU39570"/>
<dbReference type="DNASU" id="937562"/>
<dbReference type="EnsemblBacteria" id="CAB15993">
    <property type="protein sequence ID" value="CAB15993"/>
    <property type="gene ID" value="BSU_39570"/>
</dbReference>
<dbReference type="GeneID" id="937562"/>
<dbReference type="KEGG" id="bsu:BSU39570"/>
<dbReference type="PATRIC" id="fig|224308.179.peg.4282"/>
<dbReference type="InParanoid" id="P54945"/>
<dbReference type="OrthoDB" id="2891336at2"/>
<dbReference type="BioCyc" id="BSUB:BSU39570-MONOMER"/>
<dbReference type="EvolutionaryTrace" id="P54945"/>
<dbReference type="Proteomes" id="UP000001570">
    <property type="component" value="Chromosome"/>
</dbReference>
<dbReference type="CDD" id="cd19434">
    <property type="entry name" value="lipocalin_YxeF"/>
    <property type="match status" value="1"/>
</dbReference>
<dbReference type="Gene3D" id="2.40.128.20">
    <property type="match status" value="1"/>
</dbReference>
<dbReference type="InterPro" id="IPR012674">
    <property type="entry name" value="Calycin"/>
</dbReference>
<dbReference type="InterPro" id="IPR021664">
    <property type="entry name" value="DUF3255"/>
</dbReference>
<dbReference type="Pfam" id="PF11631">
    <property type="entry name" value="DUF3255"/>
    <property type="match status" value="1"/>
</dbReference>
<dbReference type="SUPFAM" id="SSF50814">
    <property type="entry name" value="Lipocalins"/>
    <property type="match status" value="1"/>
</dbReference>
<dbReference type="PROSITE" id="PS51257">
    <property type="entry name" value="PROKAR_LIPOPROTEIN"/>
    <property type="match status" value="1"/>
</dbReference>
<reference key="1">
    <citation type="journal article" date="1995" name="DNA Res.">
        <title>Cloning and sequencing of a 23-kb region of the Bacillus subtilis genome between the iol and hut operons.</title>
        <authorList>
            <person name="Yoshida K."/>
            <person name="Fujimyra M."/>
            <person name="Yanai N."/>
            <person name="Fujita Y."/>
        </authorList>
    </citation>
    <scope>NUCLEOTIDE SEQUENCE [GENOMIC DNA]</scope>
    <source>
        <strain>168 / BGSC1A1</strain>
    </source>
</reference>
<reference key="2">
    <citation type="journal article" date="1997" name="Nature">
        <title>The complete genome sequence of the Gram-positive bacterium Bacillus subtilis.</title>
        <authorList>
            <person name="Kunst F."/>
            <person name="Ogasawara N."/>
            <person name="Moszer I."/>
            <person name="Albertini A.M."/>
            <person name="Alloni G."/>
            <person name="Azevedo V."/>
            <person name="Bertero M.G."/>
            <person name="Bessieres P."/>
            <person name="Bolotin A."/>
            <person name="Borchert S."/>
            <person name="Borriss R."/>
            <person name="Boursier L."/>
            <person name="Brans A."/>
            <person name="Braun M."/>
            <person name="Brignell S.C."/>
            <person name="Bron S."/>
            <person name="Brouillet S."/>
            <person name="Bruschi C.V."/>
            <person name="Caldwell B."/>
            <person name="Capuano V."/>
            <person name="Carter N.M."/>
            <person name="Choi S.-K."/>
            <person name="Codani J.-J."/>
            <person name="Connerton I.F."/>
            <person name="Cummings N.J."/>
            <person name="Daniel R.A."/>
            <person name="Denizot F."/>
            <person name="Devine K.M."/>
            <person name="Duesterhoeft A."/>
            <person name="Ehrlich S.D."/>
            <person name="Emmerson P.T."/>
            <person name="Entian K.-D."/>
            <person name="Errington J."/>
            <person name="Fabret C."/>
            <person name="Ferrari E."/>
            <person name="Foulger D."/>
            <person name="Fritz C."/>
            <person name="Fujita M."/>
            <person name="Fujita Y."/>
            <person name="Fuma S."/>
            <person name="Galizzi A."/>
            <person name="Galleron N."/>
            <person name="Ghim S.-Y."/>
            <person name="Glaser P."/>
            <person name="Goffeau A."/>
            <person name="Golightly E.J."/>
            <person name="Grandi G."/>
            <person name="Guiseppi G."/>
            <person name="Guy B.J."/>
            <person name="Haga K."/>
            <person name="Haiech J."/>
            <person name="Harwood C.R."/>
            <person name="Henaut A."/>
            <person name="Hilbert H."/>
            <person name="Holsappel S."/>
            <person name="Hosono S."/>
            <person name="Hullo M.-F."/>
            <person name="Itaya M."/>
            <person name="Jones L.-M."/>
            <person name="Joris B."/>
            <person name="Karamata D."/>
            <person name="Kasahara Y."/>
            <person name="Klaerr-Blanchard M."/>
            <person name="Klein C."/>
            <person name="Kobayashi Y."/>
            <person name="Koetter P."/>
            <person name="Koningstein G."/>
            <person name="Krogh S."/>
            <person name="Kumano M."/>
            <person name="Kurita K."/>
            <person name="Lapidus A."/>
            <person name="Lardinois S."/>
            <person name="Lauber J."/>
            <person name="Lazarevic V."/>
            <person name="Lee S.-M."/>
            <person name="Levine A."/>
            <person name="Liu H."/>
            <person name="Masuda S."/>
            <person name="Mauel C."/>
            <person name="Medigue C."/>
            <person name="Medina N."/>
            <person name="Mellado R.P."/>
            <person name="Mizuno M."/>
            <person name="Moestl D."/>
            <person name="Nakai S."/>
            <person name="Noback M."/>
            <person name="Noone D."/>
            <person name="O'Reilly M."/>
            <person name="Ogawa K."/>
            <person name="Ogiwara A."/>
            <person name="Oudega B."/>
            <person name="Park S.-H."/>
            <person name="Parro V."/>
            <person name="Pohl T.M."/>
            <person name="Portetelle D."/>
            <person name="Porwollik S."/>
            <person name="Prescott A.M."/>
            <person name="Presecan E."/>
            <person name="Pujic P."/>
            <person name="Purnelle B."/>
            <person name="Rapoport G."/>
            <person name="Rey M."/>
            <person name="Reynolds S."/>
            <person name="Rieger M."/>
            <person name="Rivolta C."/>
            <person name="Rocha E."/>
            <person name="Roche B."/>
            <person name="Rose M."/>
            <person name="Sadaie Y."/>
            <person name="Sato T."/>
            <person name="Scanlan E."/>
            <person name="Schleich S."/>
            <person name="Schroeter R."/>
            <person name="Scoffone F."/>
            <person name="Sekiguchi J."/>
            <person name="Sekowska A."/>
            <person name="Seror S.J."/>
            <person name="Serror P."/>
            <person name="Shin B.-S."/>
            <person name="Soldo B."/>
            <person name="Sorokin A."/>
            <person name="Tacconi E."/>
            <person name="Takagi T."/>
            <person name="Takahashi H."/>
            <person name="Takemaru K."/>
            <person name="Takeuchi M."/>
            <person name="Tamakoshi A."/>
            <person name="Tanaka T."/>
            <person name="Terpstra P."/>
            <person name="Tognoni A."/>
            <person name="Tosato V."/>
            <person name="Uchiyama S."/>
            <person name="Vandenbol M."/>
            <person name="Vannier F."/>
            <person name="Vassarotti A."/>
            <person name="Viari A."/>
            <person name="Wambutt R."/>
            <person name="Wedler E."/>
            <person name="Wedler H."/>
            <person name="Weitzenegger T."/>
            <person name="Winters P."/>
            <person name="Wipat A."/>
            <person name="Yamamoto H."/>
            <person name="Yamane K."/>
            <person name="Yasumoto K."/>
            <person name="Yata K."/>
            <person name="Yoshida K."/>
            <person name="Yoshikawa H.-F."/>
            <person name="Zumstein E."/>
            <person name="Yoshikawa H."/>
            <person name="Danchin A."/>
        </authorList>
    </citation>
    <scope>NUCLEOTIDE SEQUENCE [LARGE SCALE GENOMIC DNA]</scope>
    <source>
        <strain>168</strain>
    </source>
</reference>
<reference key="3">
    <citation type="submission" date="2007-05" db="PDB data bank">
        <title>Solution NMR structure of protein yxeF, northeast structural genomics consortium target SR500A.</title>
        <authorList>
            <consortium name="Northeast structural genomics consortium (NESG)"/>
        </authorList>
    </citation>
    <scope>STRUCTURE BY NMR OF 19-144</scope>
</reference>
<keyword id="KW-0002">3D-structure</keyword>
<keyword id="KW-1185">Reference proteome</keyword>
<keyword id="KW-0732">Signal</keyword>
<sequence length="144" mass="16271">MVIPLRNKYGILFLIAVCIMVSGCQQQKEETPFYYGTWDEGRAPGPTDGVKSATVTFTEDEVVETEVMEGRGEVQLPFMAYKVISQSTDGSIEIQYLGPYYPLKSTLKRGENGTLIWEQNGQRKTMTRIESKTGREEKDEKSKS</sequence>
<name>YXEF_BACSU</name>
<feature type="signal peptide" evidence="1">
    <location>
        <begin position="1"/>
        <end position="23"/>
    </location>
</feature>
<feature type="chain" id="PRO_0000013743" description="Uncharacterized protein YxeF">
    <location>
        <begin position="24"/>
        <end position="144"/>
    </location>
</feature>
<feature type="region of interest" description="Disordered" evidence="2">
    <location>
        <begin position="119"/>
        <end position="144"/>
    </location>
</feature>
<feature type="compositionally biased region" description="Basic and acidic residues" evidence="2">
    <location>
        <begin position="127"/>
        <end position="144"/>
    </location>
</feature>
<feature type="strand" evidence="3">
    <location>
        <begin position="36"/>
        <end position="39"/>
    </location>
</feature>
<feature type="strand" evidence="3">
    <location>
        <begin position="51"/>
        <end position="57"/>
    </location>
</feature>
<feature type="strand" evidence="3">
    <location>
        <begin position="59"/>
        <end position="68"/>
    </location>
</feature>
<feature type="turn" evidence="3">
    <location>
        <begin position="69"/>
        <end position="71"/>
    </location>
</feature>
<feature type="strand" evidence="3">
    <location>
        <begin position="72"/>
        <end position="75"/>
    </location>
</feature>
<feature type="strand" evidence="3">
    <location>
        <begin position="79"/>
        <end position="85"/>
    </location>
</feature>
<feature type="strand" evidence="3">
    <location>
        <begin position="88"/>
        <end position="98"/>
    </location>
</feature>
<feature type="strand" evidence="3">
    <location>
        <begin position="104"/>
        <end position="109"/>
    </location>
</feature>
<feature type="strand" evidence="3">
    <location>
        <begin position="115"/>
        <end position="119"/>
    </location>
</feature>
<feature type="strand" evidence="3">
    <location>
        <begin position="122"/>
        <end position="128"/>
    </location>
</feature>
<feature type="strand" evidence="3">
    <location>
        <begin position="133"/>
        <end position="135"/>
    </location>
</feature>
<protein>
    <recommendedName>
        <fullName>Uncharacterized protein YxeF</fullName>
    </recommendedName>
</protein>
<organism>
    <name type="scientific">Bacillus subtilis (strain 168)</name>
    <dbReference type="NCBI Taxonomy" id="224308"/>
    <lineage>
        <taxon>Bacteria</taxon>
        <taxon>Bacillati</taxon>
        <taxon>Bacillota</taxon>
        <taxon>Bacilli</taxon>
        <taxon>Bacillales</taxon>
        <taxon>Bacillaceae</taxon>
        <taxon>Bacillus</taxon>
    </lineage>
</organism>
<accession>P54945</accession>
<proteinExistence type="evidence at protein level"/>